<keyword id="KW-0687">Ribonucleoprotein</keyword>
<keyword id="KW-0689">Ribosomal protein</keyword>
<keyword id="KW-0694">RNA-binding</keyword>
<keyword id="KW-0699">rRNA-binding</keyword>
<gene>
    <name evidence="1" type="primary">rpsQ</name>
    <name type="ordered locus">PFL_5573</name>
</gene>
<dbReference type="EMBL" id="CP000076">
    <property type="protein sequence ID" value="AAY94778.1"/>
    <property type="molecule type" value="Genomic_DNA"/>
</dbReference>
<dbReference type="RefSeq" id="WP_003194644.1">
    <property type="nucleotide sequence ID" value="NC_004129.6"/>
</dbReference>
<dbReference type="SMR" id="Q4K542"/>
<dbReference type="STRING" id="220664.PFL_5573"/>
<dbReference type="GeneID" id="96618859"/>
<dbReference type="KEGG" id="pfl:PFL_5573"/>
<dbReference type="eggNOG" id="COG0186">
    <property type="taxonomic scope" value="Bacteria"/>
</dbReference>
<dbReference type="HOGENOM" id="CLU_073626_1_1_6"/>
<dbReference type="Proteomes" id="UP000008540">
    <property type="component" value="Chromosome"/>
</dbReference>
<dbReference type="GO" id="GO:0022627">
    <property type="term" value="C:cytosolic small ribosomal subunit"/>
    <property type="evidence" value="ECO:0007669"/>
    <property type="project" value="TreeGrafter"/>
</dbReference>
<dbReference type="GO" id="GO:0019843">
    <property type="term" value="F:rRNA binding"/>
    <property type="evidence" value="ECO:0007669"/>
    <property type="project" value="UniProtKB-UniRule"/>
</dbReference>
<dbReference type="GO" id="GO:0003735">
    <property type="term" value="F:structural constituent of ribosome"/>
    <property type="evidence" value="ECO:0007669"/>
    <property type="project" value="InterPro"/>
</dbReference>
<dbReference type="GO" id="GO:0006412">
    <property type="term" value="P:translation"/>
    <property type="evidence" value="ECO:0007669"/>
    <property type="project" value="UniProtKB-UniRule"/>
</dbReference>
<dbReference type="CDD" id="cd00364">
    <property type="entry name" value="Ribosomal_uS17"/>
    <property type="match status" value="1"/>
</dbReference>
<dbReference type="FunFam" id="2.40.50.140:FF:000014">
    <property type="entry name" value="30S ribosomal protein S17"/>
    <property type="match status" value="1"/>
</dbReference>
<dbReference type="Gene3D" id="2.40.50.140">
    <property type="entry name" value="Nucleic acid-binding proteins"/>
    <property type="match status" value="1"/>
</dbReference>
<dbReference type="HAMAP" id="MF_01345_B">
    <property type="entry name" value="Ribosomal_uS17_B"/>
    <property type="match status" value="1"/>
</dbReference>
<dbReference type="InterPro" id="IPR012340">
    <property type="entry name" value="NA-bd_OB-fold"/>
</dbReference>
<dbReference type="InterPro" id="IPR000266">
    <property type="entry name" value="Ribosomal_uS17"/>
</dbReference>
<dbReference type="InterPro" id="IPR019984">
    <property type="entry name" value="Ribosomal_uS17_bact/chlr"/>
</dbReference>
<dbReference type="NCBIfam" id="NF004123">
    <property type="entry name" value="PRK05610.1"/>
    <property type="match status" value="1"/>
</dbReference>
<dbReference type="NCBIfam" id="TIGR03635">
    <property type="entry name" value="uS17_bact"/>
    <property type="match status" value="1"/>
</dbReference>
<dbReference type="PANTHER" id="PTHR10744">
    <property type="entry name" value="40S RIBOSOMAL PROTEIN S11 FAMILY MEMBER"/>
    <property type="match status" value="1"/>
</dbReference>
<dbReference type="PANTHER" id="PTHR10744:SF1">
    <property type="entry name" value="SMALL RIBOSOMAL SUBUNIT PROTEIN US17M"/>
    <property type="match status" value="1"/>
</dbReference>
<dbReference type="Pfam" id="PF00366">
    <property type="entry name" value="Ribosomal_S17"/>
    <property type="match status" value="1"/>
</dbReference>
<dbReference type="PRINTS" id="PR00973">
    <property type="entry name" value="RIBOSOMALS17"/>
</dbReference>
<dbReference type="SUPFAM" id="SSF50249">
    <property type="entry name" value="Nucleic acid-binding proteins"/>
    <property type="match status" value="1"/>
</dbReference>
<comment type="function">
    <text evidence="1">One of the primary rRNA binding proteins, it binds specifically to the 5'-end of 16S ribosomal RNA.</text>
</comment>
<comment type="subunit">
    <text evidence="1">Part of the 30S ribosomal subunit.</text>
</comment>
<comment type="similarity">
    <text evidence="1">Belongs to the universal ribosomal protein uS17 family.</text>
</comment>
<name>RS17_PSEF5</name>
<protein>
    <recommendedName>
        <fullName evidence="1">Small ribosomal subunit protein uS17</fullName>
    </recommendedName>
    <alternativeName>
        <fullName evidence="2">30S ribosomal protein S17</fullName>
    </alternativeName>
</protein>
<proteinExistence type="inferred from homology"/>
<feature type="chain" id="PRO_0000233543" description="Small ribosomal subunit protein uS17">
    <location>
        <begin position="1"/>
        <end position="88"/>
    </location>
</feature>
<organism>
    <name type="scientific">Pseudomonas fluorescens (strain ATCC BAA-477 / NRRL B-23932 / Pf-5)</name>
    <dbReference type="NCBI Taxonomy" id="220664"/>
    <lineage>
        <taxon>Bacteria</taxon>
        <taxon>Pseudomonadati</taxon>
        <taxon>Pseudomonadota</taxon>
        <taxon>Gammaproteobacteria</taxon>
        <taxon>Pseudomonadales</taxon>
        <taxon>Pseudomonadaceae</taxon>
        <taxon>Pseudomonas</taxon>
    </lineage>
</organism>
<evidence type="ECO:0000255" key="1">
    <source>
        <dbReference type="HAMAP-Rule" id="MF_01345"/>
    </source>
</evidence>
<evidence type="ECO:0000305" key="2"/>
<accession>Q4K542</accession>
<reference key="1">
    <citation type="journal article" date="2005" name="Nat. Biotechnol.">
        <title>Complete genome sequence of the plant commensal Pseudomonas fluorescens Pf-5.</title>
        <authorList>
            <person name="Paulsen I.T."/>
            <person name="Press C.M."/>
            <person name="Ravel J."/>
            <person name="Kobayashi D.Y."/>
            <person name="Myers G.S.A."/>
            <person name="Mavrodi D.V."/>
            <person name="DeBoy R.T."/>
            <person name="Seshadri R."/>
            <person name="Ren Q."/>
            <person name="Madupu R."/>
            <person name="Dodson R.J."/>
            <person name="Durkin A.S."/>
            <person name="Brinkac L.M."/>
            <person name="Daugherty S.C."/>
            <person name="Sullivan S.A."/>
            <person name="Rosovitz M.J."/>
            <person name="Gwinn M.L."/>
            <person name="Zhou L."/>
            <person name="Schneider D.J."/>
            <person name="Cartinhour S.W."/>
            <person name="Nelson W.C."/>
            <person name="Weidman J."/>
            <person name="Watkins K."/>
            <person name="Tran K."/>
            <person name="Khouri H."/>
            <person name="Pierson E.A."/>
            <person name="Pierson L.S. III"/>
            <person name="Thomashow L.S."/>
            <person name="Loper J.E."/>
        </authorList>
    </citation>
    <scope>NUCLEOTIDE SEQUENCE [LARGE SCALE GENOMIC DNA]</scope>
    <source>
        <strain>ATCC BAA-477 / NRRL B-23932 / Pf-5</strain>
    </source>
</reference>
<sequence length="88" mass="10115">MAEAEKTVRTLTGRVVSDKMDKTITVLIERRVKHPIYGKYVKRSTKLHAHDETNQCHIGDKVTIRETRPMAKTKSWALVDVLERAVEV</sequence>